<dbReference type="EMBL" id="EF083656">
    <property type="protein sequence ID" value="ABK22992.1"/>
    <property type="molecule type" value="mRNA"/>
</dbReference>
<dbReference type="SMR" id="A9NQT1"/>
<dbReference type="GO" id="GO:0009506">
    <property type="term" value="C:plasmodesma"/>
    <property type="evidence" value="ECO:0007669"/>
    <property type="project" value="TreeGrafter"/>
</dbReference>
<dbReference type="GO" id="GO:0005537">
    <property type="term" value="F:D-mannose binding"/>
    <property type="evidence" value="ECO:0007669"/>
    <property type="project" value="UniProtKB-KW"/>
</dbReference>
<dbReference type="GO" id="GO:0042742">
    <property type="term" value="P:defense response to bacterium"/>
    <property type="evidence" value="ECO:0007669"/>
    <property type="project" value="UniProtKB-KW"/>
</dbReference>
<dbReference type="GO" id="GO:0050832">
    <property type="term" value="P:defense response to fungus"/>
    <property type="evidence" value="ECO:0000250"/>
    <property type="project" value="UniProtKB"/>
</dbReference>
<dbReference type="GO" id="GO:0031640">
    <property type="term" value="P:killing of cells of another organism"/>
    <property type="evidence" value="ECO:0007669"/>
    <property type="project" value="UniProtKB-KW"/>
</dbReference>
<dbReference type="CDD" id="cd23509">
    <property type="entry name" value="Gnk2-like"/>
    <property type="match status" value="1"/>
</dbReference>
<dbReference type="Gene3D" id="3.30.430.20">
    <property type="entry name" value="Gnk2 domain, C-X8-C-X2-C motif"/>
    <property type="match status" value="1"/>
</dbReference>
<dbReference type="InterPro" id="IPR051378">
    <property type="entry name" value="Cell2Cell_Antifungal"/>
</dbReference>
<dbReference type="InterPro" id="IPR002902">
    <property type="entry name" value="GNK2"/>
</dbReference>
<dbReference type="InterPro" id="IPR038408">
    <property type="entry name" value="GNK2_sf"/>
</dbReference>
<dbReference type="PANTHER" id="PTHR32080">
    <property type="entry name" value="ANTIFUNGAL PROTEIN GINKBILOBIN-2-LIKE"/>
    <property type="match status" value="1"/>
</dbReference>
<dbReference type="PANTHER" id="PTHR32080:SF54">
    <property type="entry name" value="GNK2-HOMOLOGOUS DOMAIN-CONTAINING PROTEIN"/>
    <property type="match status" value="1"/>
</dbReference>
<dbReference type="Pfam" id="PF01657">
    <property type="entry name" value="Stress-antifung"/>
    <property type="match status" value="1"/>
</dbReference>
<dbReference type="PROSITE" id="PS51473">
    <property type="entry name" value="GNK2"/>
    <property type="match status" value="1"/>
</dbReference>
<proteinExistence type="evidence at transcript level"/>
<feature type="signal peptide" evidence="2">
    <location>
        <begin position="1"/>
        <end position="24"/>
    </location>
</feature>
<feature type="chain" id="PRO_5002741214" description="Antifungal protein ginkbilobin-like protein 1">
    <location>
        <begin position="25"/>
        <end position="133"/>
    </location>
</feature>
<feature type="domain" description="Gnk2-homologous" evidence="3">
    <location>
        <begin position="28"/>
        <end position="133"/>
    </location>
</feature>
<feature type="binding site" evidence="1">
    <location>
        <position position="36"/>
    </location>
    <ligand>
        <name>alpha-D-mannopyranose</name>
        <dbReference type="ChEBI" id="CHEBI:28729"/>
    </ligand>
</feature>
<feature type="binding site" evidence="1">
    <location>
        <position position="118"/>
    </location>
    <ligand>
        <name>alpha-D-mannopyranose</name>
        <dbReference type="ChEBI" id="CHEBI:28729"/>
    </ligand>
</feature>
<feature type="binding site" evidence="1">
    <location>
        <position position="129"/>
    </location>
    <ligand>
        <name>alpha-D-mannopyranose</name>
        <dbReference type="ChEBI" id="CHEBI:28729"/>
    </ligand>
</feature>
<feature type="disulfide bond" evidence="3">
    <location>
        <begin position="35"/>
        <end position="111"/>
    </location>
</feature>
<feature type="disulfide bond" evidence="3">
    <location>
        <begin position="87"/>
        <end position="96"/>
    </location>
</feature>
<feature type="disulfide bond" evidence="3">
    <location>
        <begin position="99"/>
        <end position="124"/>
    </location>
</feature>
<sequence>MSMGSFGFALAVMVLAVLVASAAGAPNTNFVSSACNTKKIPSGNPFFNNLGALLVNLEKNTAFSGYDYKASRAGSGGAPTAYGRGVCKQSISQSDCTACLTNLGGRIWGICKNAIGARVQLTDCFIRYEQYSI</sequence>
<accession>A9NQT1</accession>
<name>GNKL1_PICSI</name>
<protein>
    <recommendedName>
        <fullName evidence="4">Antifungal protein ginkbilobin-like protein 1</fullName>
    </recommendedName>
</protein>
<organism>
    <name type="scientific">Picea sitchensis</name>
    <name type="common">Sitka spruce</name>
    <name type="synonym">Pinus sitchensis</name>
    <dbReference type="NCBI Taxonomy" id="3332"/>
    <lineage>
        <taxon>Eukaryota</taxon>
        <taxon>Viridiplantae</taxon>
        <taxon>Streptophyta</taxon>
        <taxon>Embryophyta</taxon>
        <taxon>Tracheophyta</taxon>
        <taxon>Spermatophyta</taxon>
        <taxon>Pinopsida</taxon>
        <taxon>Pinidae</taxon>
        <taxon>Conifers I</taxon>
        <taxon>Pinales</taxon>
        <taxon>Pinaceae</taxon>
        <taxon>Picea</taxon>
    </lineage>
</organism>
<keyword id="KW-0044">Antibiotic</keyword>
<keyword id="KW-0929">Antimicrobial</keyword>
<keyword id="KW-1015">Disulfide bond</keyword>
<keyword id="KW-0295">Fungicide</keyword>
<keyword id="KW-0430">Lectin</keyword>
<keyword id="KW-0465">Mannose-binding</keyword>
<keyword id="KW-0611">Plant defense</keyword>
<keyword id="KW-0732">Signal</keyword>
<comment type="function">
    <text evidence="1">Exerts antifungal activity through its carbohydrate-binding specificity.</text>
</comment>
<evidence type="ECO:0000250" key="1">
    <source>
        <dbReference type="UniProtKB" id="A4ZDL6"/>
    </source>
</evidence>
<evidence type="ECO:0000255" key="2"/>
<evidence type="ECO:0000255" key="3">
    <source>
        <dbReference type="PROSITE-ProRule" id="PRU00806"/>
    </source>
</evidence>
<evidence type="ECO:0000305" key="4"/>
<evidence type="ECO:0000312" key="5">
    <source>
        <dbReference type="EMBL" id="ABK22992.1"/>
    </source>
</evidence>
<reference key="1">
    <citation type="journal article" date="2008" name="BMC Genomics">
        <title>A conifer genomics resource of 200,000 spruce (Picea spp.) ESTs and 6,464 high-quality, sequence-finished full-length cDNAs for Sitka spruce (Picea sitchensis).</title>
        <authorList>
            <person name="Ralph S.G."/>
            <person name="Chun H.J.E."/>
            <person name="Kolosova N."/>
            <person name="Cooper D."/>
            <person name="Oddy C."/>
            <person name="Ritland C.E."/>
            <person name="Kirkpatrick R."/>
            <person name="Moore R."/>
            <person name="Barber S."/>
            <person name="Holt R.A."/>
            <person name="Jones S.J.M."/>
            <person name="Marra M.A."/>
            <person name="Douglas C.J."/>
            <person name="Ritland K."/>
            <person name="Bohlmann J."/>
        </authorList>
    </citation>
    <scope>NUCLEOTIDE SEQUENCE [MRNA]</scope>
    <source>
        <tissue evidence="5">Bark</tissue>
    </source>
</reference>
<reference key="2">
    <citation type="journal article" date="2016" name="Protoplasma">
        <title>An antifungal protein from Ginkgo biloba binds actin and can trigger cell death.</title>
        <authorList>
            <person name="Gao N."/>
            <person name="Wadhwani P."/>
            <person name="Muehlhaeuser P."/>
            <person name="Liu Q."/>
            <person name="Riemann M."/>
            <person name="Ulrich A.S."/>
            <person name="Nick P."/>
        </authorList>
    </citation>
    <scope>IDENTIFICATION</scope>
</reference>